<keyword id="KW-0004">4Fe-4S</keyword>
<keyword id="KW-0408">Iron</keyword>
<keyword id="KW-0411">Iron-sulfur</keyword>
<keyword id="KW-0456">Lyase</keyword>
<keyword id="KW-0479">Metal-binding</keyword>
<keyword id="KW-0949">S-adenosyl-L-methionine</keyword>
<keyword id="KW-0784">Thiamine biosynthesis</keyword>
<keyword id="KW-0862">Zinc</keyword>
<reference key="1">
    <citation type="submission" date="2005-07" db="EMBL/GenBank/DDBJ databases">
        <title>Complete sequence of Synechococcus sp. CC9605.</title>
        <authorList>
            <consortium name="US DOE Joint Genome Institute"/>
            <person name="Copeland A."/>
            <person name="Lucas S."/>
            <person name="Lapidus A."/>
            <person name="Barry K."/>
            <person name="Detter J.C."/>
            <person name="Glavina T."/>
            <person name="Hammon N."/>
            <person name="Israni S."/>
            <person name="Pitluck S."/>
            <person name="Schmutz J."/>
            <person name="Martinez M."/>
            <person name="Larimer F."/>
            <person name="Land M."/>
            <person name="Kyrpides N."/>
            <person name="Ivanova N."/>
            <person name="Richardson P."/>
        </authorList>
    </citation>
    <scope>NUCLEOTIDE SEQUENCE [LARGE SCALE GENOMIC DNA]</scope>
    <source>
        <strain>CC9605</strain>
    </source>
</reference>
<organism>
    <name type="scientific">Synechococcus sp. (strain CC9605)</name>
    <dbReference type="NCBI Taxonomy" id="110662"/>
    <lineage>
        <taxon>Bacteria</taxon>
        <taxon>Bacillati</taxon>
        <taxon>Cyanobacteriota</taxon>
        <taxon>Cyanophyceae</taxon>
        <taxon>Synechococcales</taxon>
        <taxon>Synechococcaceae</taxon>
        <taxon>Synechococcus</taxon>
    </lineage>
</organism>
<comment type="function">
    <text evidence="1">Catalyzes the synthesis of the hydroxymethylpyrimidine phosphate (HMP-P) moiety of thiamine from aminoimidazole ribotide (AIR) in a radical S-adenosyl-L-methionine (SAM)-dependent reaction.</text>
</comment>
<comment type="catalytic activity">
    <reaction evidence="1">
        <text>5-amino-1-(5-phospho-beta-D-ribosyl)imidazole + S-adenosyl-L-methionine = 4-amino-2-methyl-5-(phosphooxymethyl)pyrimidine + CO + 5'-deoxyadenosine + formate + L-methionine + 3 H(+)</text>
        <dbReference type="Rhea" id="RHEA:24840"/>
        <dbReference type="ChEBI" id="CHEBI:15378"/>
        <dbReference type="ChEBI" id="CHEBI:15740"/>
        <dbReference type="ChEBI" id="CHEBI:17245"/>
        <dbReference type="ChEBI" id="CHEBI:17319"/>
        <dbReference type="ChEBI" id="CHEBI:57844"/>
        <dbReference type="ChEBI" id="CHEBI:58354"/>
        <dbReference type="ChEBI" id="CHEBI:59789"/>
        <dbReference type="ChEBI" id="CHEBI:137981"/>
        <dbReference type="EC" id="4.1.99.17"/>
    </reaction>
</comment>
<comment type="cofactor">
    <cofactor evidence="1">
        <name>[4Fe-4S] cluster</name>
        <dbReference type="ChEBI" id="CHEBI:49883"/>
    </cofactor>
    <text evidence="1">Binds 1 [4Fe-4S] cluster per subunit. The cluster is coordinated with 3 cysteines and an exchangeable S-adenosyl-L-methionine.</text>
</comment>
<comment type="pathway">
    <text evidence="1">Cofactor biosynthesis; thiamine diphosphate biosynthesis.</text>
</comment>
<comment type="similarity">
    <text evidence="1">Belongs to the ThiC family.</text>
</comment>
<feature type="chain" id="PRO_0000242306" description="Phosphomethylpyrimidine synthase">
    <location>
        <begin position="1"/>
        <end position="484"/>
    </location>
</feature>
<feature type="binding site" evidence="1">
    <location>
        <position position="97"/>
    </location>
    <ligand>
        <name>substrate</name>
    </ligand>
</feature>
<feature type="binding site" evidence="1">
    <location>
        <position position="126"/>
    </location>
    <ligand>
        <name>substrate</name>
    </ligand>
</feature>
<feature type="binding site" evidence="1">
    <location>
        <position position="156"/>
    </location>
    <ligand>
        <name>substrate</name>
    </ligand>
</feature>
<feature type="binding site" evidence="1">
    <location>
        <position position="192"/>
    </location>
    <ligand>
        <name>substrate</name>
    </ligand>
</feature>
<feature type="binding site" evidence="1">
    <location>
        <begin position="212"/>
        <end position="214"/>
    </location>
    <ligand>
        <name>substrate</name>
    </ligand>
</feature>
<feature type="binding site" evidence="1">
    <location>
        <begin position="253"/>
        <end position="256"/>
    </location>
    <ligand>
        <name>substrate</name>
    </ligand>
</feature>
<feature type="binding site" evidence="1">
    <location>
        <position position="292"/>
    </location>
    <ligand>
        <name>substrate</name>
    </ligand>
</feature>
<feature type="binding site" evidence="1">
    <location>
        <position position="296"/>
    </location>
    <ligand>
        <name>Zn(2+)</name>
        <dbReference type="ChEBI" id="CHEBI:29105"/>
    </ligand>
</feature>
<feature type="binding site" evidence="1">
    <location>
        <position position="319"/>
    </location>
    <ligand>
        <name>substrate</name>
    </ligand>
</feature>
<feature type="binding site" evidence="1">
    <location>
        <position position="360"/>
    </location>
    <ligand>
        <name>Zn(2+)</name>
        <dbReference type="ChEBI" id="CHEBI:29105"/>
    </ligand>
</feature>
<feature type="binding site" evidence="1">
    <location>
        <position position="440"/>
    </location>
    <ligand>
        <name>[4Fe-4S] cluster</name>
        <dbReference type="ChEBI" id="CHEBI:49883"/>
        <note>4Fe-4S-S-AdoMet</note>
    </ligand>
</feature>
<feature type="binding site" evidence="1">
    <location>
        <position position="443"/>
    </location>
    <ligand>
        <name>[4Fe-4S] cluster</name>
        <dbReference type="ChEBI" id="CHEBI:49883"/>
        <note>4Fe-4S-S-AdoMet</note>
    </ligand>
</feature>
<feature type="binding site" evidence="1">
    <location>
        <position position="448"/>
    </location>
    <ligand>
        <name>[4Fe-4S] cluster</name>
        <dbReference type="ChEBI" id="CHEBI:49883"/>
        <note>4Fe-4S-S-AdoMet</note>
    </ligand>
</feature>
<proteinExistence type="inferred from homology"/>
<gene>
    <name evidence="1" type="primary">thiC</name>
    <name type="ordered locus">Syncc9605_0123</name>
</gene>
<accession>Q3AND3</accession>
<sequence length="484" mass="53363">MIHGQTSTPGLSVAPQIMRASWVESRKGQANVSQMHYARQGVVTEEMAHVAKRENLPESLVMEEVARGRMIIPANINHTNLEPMAIGIASKCKVNANIGASPNASDAAEEVKKLKLAVKYGADTVMDLSTGGVNLDEVRTAIIGASPVPIGTVPVYQALESVHGSIEKLDEDDFLHIIEKHCQQGVDYQTIHAGLLIEHLPKVKGRITGIVSRGGGILAQWMLYHHRQNPLYTRFDDICEIFKRYDCTFSLGDSLRPGCQHDASDAAQLAELHTLGELTRRAWKHDVQVMVEGPGHVPLDQIEFNVKKQMEECSEAPFYVLGPLVTDIAPGYDHITSAIGAAMAGWHGTAMLCYVTPKEHLGLPNADDVREGLIAYKIAAHAADIARHRPGARDRDDELSRARYNFDWNKQFELSLDPERAKEYHDETLPADIYKQAEFCSMCGPKHCPMQTKITDEDLEGLEKVLEANTGAAELTPVKLDKAD</sequence>
<dbReference type="EC" id="4.1.99.17" evidence="1"/>
<dbReference type="EMBL" id="CP000110">
    <property type="protein sequence ID" value="ABB33899.1"/>
    <property type="molecule type" value="Genomic_DNA"/>
</dbReference>
<dbReference type="SMR" id="Q3AND3"/>
<dbReference type="STRING" id="110662.Syncc9605_0123"/>
<dbReference type="KEGG" id="syd:Syncc9605_0123"/>
<dbReference type="eggNOG" id="COG0422">
    <property type="taxonomic scope" value="Bacteria"/>
</dbReference>
<dbReference type="HOGENOM" id="CLU_013181_2_1_3"/>
<dbReference type="UniPathway" id="UPA00060"/>
<dbReference type="GO" id="GO:0005829">
    <property type="term" value="C:cytosol"/>
    <property type="evidence" value="ECO:0007669"/>
    <property type="project" value="TreeGrafter"/>
</dbReference>
<dbReference type="GO" id="GO:0051539">
    <property type="term" value="F:4 iron, 4 sulfur cluster binding"/>
    <property type="evidence" value="ECO:0007669"/>
    <property type="project" value="UniProtKB-KW"/>
</dbReference>
<dbReference type="GO" id="GO:0016830">
    <property type="term" value="F:carbon-carbon lyase activity"/>
    <property type="evidence" value="ECO:0007669"/>
    <property type="project" value="InterPro"/>
</dbReference>
<dbReference type="GO" id="GO:0008270">
    <property type="term" value="F:zinc ion binding"/>
    <property type="evidence" value="ECO:0007669"/>
    <property type="project" value="UniProtKB-UniRule"/>
</dbReference>
<dbReference type="GO" id="GO:0009228">
    <property type="term" value="P:thiamine biosynthetic process"/>
    <property type="evidence" value="ECO:0007669"/>
    <property type="project" value="UniProtKB-KW"/>
</dbReference>
<dbReference type="GO" id="GO:0009229">
    <property type="term" value="P:thiamine diphosphate biosynthetic process"/>
    <property type="evidence" value="ECO:0007669"/>
    <property type="project" value="UniProtKB-UniRule"/>
</dbReference>
<dbReference type="FunFam" id="3.20.20.540:FF:000001">
    <property type="entry name" value="Phosphomethylpyrimidine synthase"/>
    <property type="match status" value="1"/>
</dbReference>
<dbReference type="Gene3D" id="6.10.250.620">
    <property type="match status" value="1"/>
</dbReference>
<dbReference type="Gene3D" id="3.20.20.540">
    <property type="entry name" value="Radical SAM ThiC family, central domain"/>
    <property type="match status" value="1"/>
</dbReference>
<dbReference type="HAMAP" id="MF_00089">
    <property type="entry name" value="ThiC"/>
    <property type="match status" value="1"/>
</dbReference>
<dbReference type="InterPro" id="IPR037509">
    <property type="entry name" value="ThiC"/>
</dbReference>
<dbReference type="InterPro" id="IPR038521">
    <property type="entry name" value="ThiC/Bza_core_dom"/>
</dbReference>
<dbReference type="InterPro" id="IPR002817">
    <property type="entry name" value="ThiC/BzaA/B"/>
</dbReference>
<dbReference type="NCBIfam" id="NF006763">
    <property type="entry name" value="PRK09284.1"/>
    <property type="match status" value="1"/>
</dbReference>
<dbReference type="NCBIfam" id="NF009895">
    <property type="entry name" value="PRK13352.1"/>
    <property type="match status" value="1"/>
</dbReference>
<dbReference type="NCBIfam" id="TIGR00190">
    <property type="entry name" value="thiC"/>
    <property type="match status" value="1"/>
</dbReference>
<dbReference type="PANTHER" id="PTHR30557:SF1">
    <property type="entry name" value="PHOSPHOMETHYLPYRIMIDINE SYNTHASE, CHLOROPLASTIC"/>
    <property type="match status" value="1"/>
</dbReference>
<dbReference type="PANTHER" id="PTHR30557">
    <property type="entry name" value="THIAMINE BIOSYNTHESIS PROTEIN THIC"/>
    <property type="match status" value="1"/>
</dbReference>
<dbReference type="Pfam" id="PF01964">
    <property type="entry name" value="ThiC_Rad_SAM"/>
    <property type="match status" value="1"/>
</dbReference>
<dbReference type="SFLD" id="SFLDF00407">
    <property type="entry name" value="phosphomethylpyrimidine_syntha"/>
    <property type="match status" value="1"/>
</dbReference>
<dbReference type="SFLD" id="SFLDG01114">
    <property type="entry name" value="phosphomethylpyrimidine_syntha"/>
    <property type="match status" value="1"/>
</dbReference>
<dbReference type="SFLD" id="SFLDS00113">
    <property type="entry name" value="Radical_SAM_Phosphomethylpyrim"/>
    <property type="match status" value="1"/>
</dbReference>
<protein>
    <recommendedName>
        <fullName evidence="1">Phosphomethylpyrimidine synthase</fullName>
        <ecNumber evidence="1">4.1.99.17</ecNumber>
    </recommendedName>
    <alternativeName>
        <fullName evidence="1">Hydroxymethylpyrimidine phosphate synthase</fullName>
        <shortName evidence="1">HMP-P synthase</shortName>
        <shortName evidence="1">HMP-phosphate synthase</shortName>
        <shortName evidence="1">HMPP synthase</shortName>
    </alternativeName>
    <alternativeName>
        <fullName evidence="1">Thiamine biosynthesis protein ThiC</fullName>
    </alternativeName>
</protein>
<evidence type="ECO:0000255" key="1">
    <source>
        <dbReference type="HAMAP-Rule" id="MF_00089"/>
    </source>
</evidence>
<name>THIC_SYNSC</name>